<evidence type="ECO:0000250" key="1">
    <source>
        <dbReference type="UniProtKB" id="O22415"/>
    </source>
</evidence>
<evidence type="ECO:0000250" key="2">
    <source>
        <dbReference type="UniProtKB" id="P02879"/>
    </source>
</evidence>
<evidence type="ECO:0000250" key="3">
    <source>
        <dbReference type="UniProtKB" id="P93543"/>
    </source>
</evidence>
<evidence type="ECO:0000255" key="4">
    <source>
        <dbReference type="PROSITE-ProRule" id="PRU00174"/>
    </source>
</evidence>
<evidence type="ECO:0000255" key="5">
    <source>
        <dbReference type="RuleBase" id="RU004915"/>
    </source>
</evidence>
<evidence type="ECO:0000269" key="6">
    <source>
    </source>
</evidence>
<evidence type="ECO:0000269" key="7">
    <source>
    </source>
</evidence>
<evidence type="ECO:0000269" key="8">
    <source>
    </source>
</evidence>
<evidence type="ECO:0000269" key="9">
    <source>
    </source>
</evidence>
<evidence type="ECO:0000303" key="10">
    <source>
    </source>
</evidence>
<evidence type="ECO:0000303" key="11">
    <source>
    </source>
</evidence>
<evidence type="ECO:0000305" key="12"/>
<evidence type="ECO:0000305" key="13">
    <source>
    </source>
</evidence>
<evidence type="ECO:0000305" key="14">
    <source>
    </source>
</evidence>
<feature type="signal peptide" evidence="8">
    <location>
        <begin position="1"/>
        <end position="28"/>
    </location>
</feature>
<feature type="chain" id="PRO_0000437971" description="SNAI-A chain" evidence="12">
    <location>
        <begin position="29"/>
        <end position="289"/>
    </location>
</feature>
<feature type="peptide" id="PRO_0000437972" description="Linker peptide" evidence="3">
    <location>
        <begin position="290"/>
        <end position="308"/>
    </location>
</feature>
<feature type="chain" id="PRO_0000437973" description="SNAI-B chain" evidence="13">
    <location>
        <begin position="309"/>
        <end position="570"/>
    </location>
</feature>
<feature type="chain" id="PRO_0000437974" description="TrSNAI" evidence="14">
    <location>
        <begin position="434"/>
        <end position="570"/>
    </location>
</feature>
<feature type="domain" description="Ricin B-type lectin 1" evidence="4">
    <location>
        <begin position="319"/>
        <end position="439"/>
    </location>
</feature>
<feature type="repeat" description="1-alpha" evidence="13">
    <location>
        <begin position="329"/>
        <end position="369"/>
    </location>
</feature>
<feature type="repeat" description="1-beta" evidence="13">
    <location>
        <begin position="370"/>
        <end position="405"/>
    </location>
</feature>
<feature type="repeat" description="1-gamma" evidence="13">
    <location>
        <begin position="408"/>
        <end position="440"/>
    </location>
</feature>
<feature type="domain" description="Ricin B-type lectin 2" evidence="4">
    <location>
        <begin position="441"/>
        <end position="566"/>
    </location>
</feature>
<feature type="repeat" description="2-alpha" evidence="13">
    <location>
        <begin position="452"/>
        <end position="489"/>
    </location>
</feature>
<feature type="repeat" description="2-beta" evidence="13">
    <location>
        <begin position="493"/>
        <end position="531"/>
    </location>
</feature>
<feature type="repeat" description="2-gamma" evidence="13">
    <location>
        <begin position="534"/>
        <end position="567"/>
    </location>
</feature>
<feature type="active site" evidence="2">
    <location>
        <position position="199"/>
    </location>
</feature>
<feature type="glycosylation site" description="N-linked (GlcNAc...) asparagine" evidence="6">
    <location>
        <position position="40"/>
    </location>
</feature>
<feature type="glycosylation site" description="N-linked (GlcNAc...) asparagine" evidence="6">
    <location>
        <position position="62"/>
    </location>
</feature>
<feature type="glycosylation site" description="N-linked (GlcNAc...) asparagine" evidence="6">
    <location>
        <position position="144"/>
    </location>
</feature>
<feature type="glycosylation site" description="N-linked (GlcNAc...) asparagine" evidence="6">
    <location>
        <position position="260"/>
    </location>
</feature>
<feature type="glycosylation site" description="N-linked (GlcNAc...) asparagine" evidence="6">
    <location>
        <position position="492"/>
    </location>
</feature>
<feature type="glycosylation site" description="N-linked (GlcNAc...) asparagine" evidence="6">
    <location>
        <position position="526"/>
    </location>
</feature>
<feature type="disulfide bond" description="Interchain (between A and B chains)" evidence="4">
    <location>
        <begin position="284"/>
        <end position="316"/>
    </location>
</feature>
<feature type="disulfide bond" evidence="4">
    <location>
        <begin position="332"/>
        <end position="351"/>
    </location>
</feature>
<feature type="disulfide bond" description="Interchain (between two adjacent B chains)" evidence="13">
    <location>
        <position position="355"/>
    </location>
</feature>
<feature type="disulfide bond" evidence="4">
    <location>
        <begin position="373"/>
        <end position="385"/>
    </location>
</feature>
<feature type="disulfide bond" evidence="4">
    <location>
        <begin position="455"/>
        <end position="470"/>
    </location>
</feature>
<feature type="disulfide bond" evidence="4">
    <location>
        <begin position="496"/>
        <end position="513"/>
    </location>
</feature>
<dbReference type="EC" id="3.2.2.22" evidence="5"/>
<dbReference type="EMBL" id="U27122">
    <property type="protein sequence ID" value="AAC49158.1"/>
    <property type="molecule type" value="mRNA"/>
</dbReference>
<dbReference type="PIR" id="S62627">
    <property type="entry name" value="S62627"/>
</dbReference>
<dbReference type="SMR" id="Q41358"/>
<dbReference type="GlyCosmos" id="Q41358">
    <property type="glycosylation" value="6 sites, No reported glycans"/>
</dbReference>
<dbReference type="iPTMnet" id="Q41358"/>
<dbReference type="GO" id="GO:0030246">
    <property type="term" value="F:carbohydrate binding"/>
    <property type="evidence" value="ECO:0007669"/>
    <property type="project" value="UniProtKB-KW"/>
</dbReference>
<dbReference type="GO" id="GO:0000166">
    <property type="term" value="F:nucleotide binding"/>
    <property type="evidence" value="ECO:0007669"/>
    <property type="project" value="UniProtKB-KW"/>
</dbReference>
<dbReference type="GO" id="GO:0030598">
    <property type="term" value="F:rRNA N-glycosylase activity"/>
    <property type="evidence" value="ECO:0007669"/>
    <property type="project" value="UniProtKB-EC"/>
</dbReference>
<dbReference type="GO" id="GO:0090729">
    <property type="term" value="F:toxin activity"/>
    <property type="evidence" value="ECO:0007669"/>
    <property type="project" value="UniProtKB-KW"/>
</dbReference>
<dbReference type="GO" id="GO:0006952">
    <property type="term" value="P:defense response"/>
    <property type="evidence" value="ECO:0007669"/>
    <property type="project" value="UniProtKB-KW"/>
</dbReference>
<dbReference type="GO" id="GO:0017148">
    <property type="term" value="P:negative regulation of translation"/>
    <property type="evidence" value="ECO:0007669"/>
    <property type="project" value="UniProtKB-KW"/>
</dbReference>
<dbReference type="CDD" id="cd23483">
    <property type="entry name" value="beta-trefoil_Ricin_ebulin-like_rpt1"/>
    <property type="match status" value="1"/>
</dbReference>
<dbReference type="CDD" id="cd23490">
    <property type="entry name" value="beta-trefoil_Ricin_ebulin-like_rpt2"/>
    <property type="match status" value="1"/>
</dbReference>
<dbReference type="Gene3D" id="2.80.10.50">
    <property type="match status" value="2"/>
</dbReference>
<dbReference type="Gene3D" id="3.40.420.10">
    <property type="entry name" value="Ricin (A subunit), domain 1"/>
    <property type="match status" value="1"/>
</dbReference>
<dbReference type="Gene3D" id="4.10.470.10">
    <property type="entry name" value="Ricin (A Subunit), domain 2"/>
    <property type="match status" value="1"/>
</dbReference>
<dbReference type="InterPro" id="IPR036041">
    <property type="entry name" value="Ribosome-inact_prot_sf"/>
</dbReference>
<dbReference type="InterPro" id="IPR017989">
    <property type="entry name" value="Ribosome_inactivat_1/2"/>
</dbReference>
<dbReference type="InterPro" id="IPR001574">
    <property type="entry name" value="Ribosome_inactivat_prot"/>
</dbReference>
<dbReference type="InterPro" id="IPR017988">
    <property type="entry name" value="Ribosome_inactivat_prot_CS"/>
</dbReference>
<dbReference type="InterPro" id="IPR016138">
    <property type="entry name" value="Ribosome_inactivat_prot_sub1"/>
</dbReference>
<dbReference type="InterPro" id="IPR016139">
    <property type="entry name" value="Ribosome_inactivat_prot_sub2"/>
</dbReference>
<dbReference type="InterPro" id="IPR035992">
    <property type="entry name" value="Ricin_B-like_lectins"/>
</dbReference>
<dbReference type="InterPro" id="IPR000772">
    <property type="entry name" value="Ricin_B_lectin"/>
</dbReference>
<dbReference type="PANTHER" id="PTHR33453">
    <property type="match status" value="1"/>
</dbReference>
<dbReference type="PANTHER" id="PTHR33453:SF34">
    <property type="entry name" value="RIBOSOME-INACTIVATING PROTEIN"/>
    <property type="match status" value="1"/>
</dbReference>
<dbReference type="Pfam" id="PF00652">
    <property type="entry name" value="Ricin_B_lectin"/>
    <property type="match status" value="2"/>
</dbReference>
<dbReference type="Pfam" id="PF00161">
    <property type="entry name" value="RIP"/>
    <property type="match status" value="1"/>
</dbReference>
<dbReference type="PRINTS" id="PR00396">
    <property type="entry name" value="SHIGARICIN"/>
</dbReference>
<dbReference type="SMART" id="SM00458">
    <property type="entry name" value="RICIN"/>
    <property type="match status" value="2"/>
</dbReference>
<dbReference type="SUPFAM" id="SSF56371">
    <property type="entry name" value="Ribosome inactivating proteins (RIP)"/>
    <property type="match status" value="1"/>
</dbReference>
<dbReference type="SUPFAM" id="SSF50370">
    <property type="entry name" value="Ricin B-like lectins"/>
    <property type="match status" value="2"/>
</dbReference>
<dbReference type="PROSITE" id="PS50231">
    <property type="entry name" value="RICIN_B_LECTIN"/>
    <property type="match status" value="2"/>
</dbReference>
<dbReference type="PROSITE" id="PS00275">
    <property type="entry name" value="SHIGA_RICIN"/>
    <property type="match status" value="1"/>
</dbReference>
<organism>
    <name type="scientific">Sambucus nigra</name>
    <name type="common">European elder</name>
    <dbReference type="NCBI Taxonomy" id="4202"/>
    <lineage>
        <taxon>Eukaryota</taxon>
        <taxon>Viridiplantae</taxon>
        <taxon>Streptophyta</taxon>
        <taxon>Embryophyta</taxon>
        <taxon>Tracheophyta</taxon>
        <taxon>Spermatophyta</taxon>
        <taxon>Magnoliopsida</taxon>
        <taxon>eudicotyledons</taxon>
        <taxon>Gunneridae</taxon>
        <taxon>Pentapetalae</taxon>
        <taxon>asterids</taxon>
        <taxon>campanulids</taxon>
        <taxon>Dipsacales</taxon>
        <taxon>Adoxaceae</taxon>
        <taxon>Sambucus</taxon>
    </lineage>
</organism>
<reference key="1">
    <citation type="journal article" date="1996" name="Eur. J. Biochem.">
        <title>The NeuAc(alpha-2,6)-Gal/GalNAc-binding lectin from elderberry (Sambucus nigra) bark, a type-2 ribosome-inactivating protein with an unusual specificity and structure.</title>
        <authorList>
            <person name="Van Damme E.J."/>
            <person name="Barre A."/>
            <person name="Rouge P."/>
            <person name="Van Leuven F."/>
            <person name="Peumans W.J."/>
        </authorList>
    </citation>
    <scope>NUCLEOTIDE SEQUENCE [MRNA]</scope>
    <scope>FUNCTION</scope>
    <scope>PROTEIN SEQUENCE OF 29-39 AND 309-319</scope>
    <scope>3D-STRUCTURE MODELING</scope>
    <scope>SUBUNIT</scope>
    <scope>DOMAIN</scope>
    <scope>GLYCOSYLATION</scope>
    <scope>TISSUE SPECIFICITY</scope>
    <source>
        <tissue>Bark</tissue>
    </source>
</reference>
<reference key="2">
    <citation type="journal article" date="1998" name="FEBS Lett.">
        <title>Elderberry (Sambucus nigra) contains truncated Neu5Ac(alpha-2,6)Gal/GalNAc-binding type 2 ribosome-inactivating proteins.</title>
        <authorList>
            <person name="Peumans W.J."/>
            <person name="Roy S."/>
            <person name="Barre A."/>
            <person name="Rouge P."/>
            <person name="van Leuven F."/>
            <person name="van Damme E.J."/>
        </authorList>
    </citation>
    <scope>FUNCTION (TRSNAI)</scope>
    <scope>PROTEOLYTIC PROCESSING</scope>
    <scope>PROTEIN SEQUENCE OF 434-453</scope>
    <scope>3D-STRUCTURE MODELING</scope>
</reference>
<reference key="3">
    <citation type="journal article" date="1987" name="J. Biol. Chem.">
        <title>The elderberry (Sambucus nigra L.) bark lectin recognizes the Neu5Ac(alpha 2-6)Gal/GalNAc sequence.</title>
        <authorList>
            <person name="Shibuya N."/>
            <person name="Goldstein I.J."/>
            <person name="Broekaert W.F."/>
            <person name="Nsimba-Lubaki M."/>
            <person name="Peeters B."/>
            <person name="Peumans W.J."/>
        </authorList>
    </citation>
    <scope>FUNCTION</scope>
</reference>
<reference key="4">
    <citation type="journal article" date="2016" name="Glycoconj. J.">
        <title>Site specific N-glycan profiling of NeuAc(alpha2-6)-Gal/GalNAc-binding bark Sambucus nigra agglutinin using LC-MS(n) revealed differential glycosylation.</title>
        <authorList>
            <person name="Gnanesh Kumar B.S."/>
            <person name="Surolia A."/>
        </authorList>
    </citation>
    <scope>GLYCOSYLATION AT ASN-40; ASN-62; ASN-144; ASN-260; ASN-492 AND ASN-526</scope>
</reference>
<proteinExistence type="evidence at protein level"/>
<keyword id="KW-0903">Direct protein sequencing</keyword>
<keyword id="KW-1015">Disulfide bond</keyword>
<keyword id="KW-0325">Glycoprotein</keyword>
<keyword id="KW-0378">Hydrolase</keyword>
<keyword id="KW-0430">Lectin</keyword>
<keyword id="KW-0547">Nucleotide-binding</keyword>
<keyword id="KW-0611">Plant defense</keyword>
<keyword id="KW-0652">Protein synthesis inhibitor</keyword>
<keyword id="KW-0677">Repeat</keyword>
<keyword id="KW-0732">Signal</keyword>
<keyword id="KW-0800">Toxin</keyword>
<protein>
    <recommendedName>
        <fullName evidence="10">Ribosome-inactivating protein SNAI</fullName>
    </recommendedName>
    <alternativeName>
        <fullName>Agglutinin I</fullName>
    </alternativeName>
    <component>
        <recommendedName>
            <fullName evidence="11">SNAI-A chain</fullName>
            <ecNumber evidence="5">3.2.2.22</ecNumber>
        </recommendedName>
        <alternativeName>
            <fullName evidence="5">rRNA N-glycosidase</fullName>
        </alternativeName>
    </component>
    <component>
        <recommendedName>
            <fullName>Linker peptide</fullName>
        </recommendedName>
    </component>
    <component>
        <recommendedName>
            <fullName evidence="11">SNAI-B chain</fullName>
        </recommendedName>
    </component>
    <component>
        <recommendedName>
            <fullName evidence="11">TrSNAI</fullName>
        </recommendedName>
    </component>
</protein>
<sequence length="570" mass="63102">MRLVAKLLYLAVLAICGLGIHGALTHPRVTPPVYPSVSFNLTGADTYEPFLRALQEKVILGNHTAFDLPVLNPESQVSDSNRFVLVPLTNPSGDTVTLAIDVVNLYVVAFSSNGKSYFFSGSTAVQRDNLFVDTTQEELNFTGNYTSLERQVGFGRVYIPLGPKSLDQAISSLRTYTLTAGDTKPLARGLLVVIQMVSEAARFRYIELRIRTSITDASEFTPDLLMLSMENNWSSMSSEIQQAQPGGIFAGVVQLRDERNNSIEVTNFRRLFELTYIAVLLYGCAPVTSSSYSNNAIDAQIIKMPVFRGGEYEKVCSVVEVTRRISGWDGLCVDVRYGHYIDGNPVQLRPCGNECNQLWTFRTDGTIRWLGKCLTASSSVMIYDCNTVPPEATKWVVSIDGTITNPHSGLVLTAPQAAEGTALSLENNIHAARQGWTVGDVEPLVTFIVGYKQMCLRENGENNFVWLEDCVLNRVQQEWALYGDGTIRVNSNRSLCVTSEDHEPSDLIVILKCEGSGNQRWVFNTNGTISNPNAKLLMDVAQRDVSLRKIILYRPTGNPNQQWITTTHPA</sequence>
<accession>Q41358</accession>
<name>SNAIB_SAMNI</name>
<comment type="function">
    <text evidence="1 7 8 12">Neu5Ac(alpha2-6)Gal/GalNAc specific agglutinin (PubMed:3805045). Behaves as a type-2 ribosome-inactivating protein (PubMed:8631319). Strongly inhibits mammalian but not plant ribosomes (PubMed:8631319). The A chain is responsible for inhibiting protein synthesis through the catalytic inactivation of 60S ribosomal subunits by removing adenine from position 4,324 of 28S rRNA (Probable). The B chain binds to cell receptors and probably facilitates the entry into the cell of the A chain; B chains are also responsible for cell agglutination (lectin activity) (Probable). Involved in plant defense against insects (By similarity).</text>
</comment>
<comment type="function">
    <molecule>TrSNAI</molecule>
    <text evidence="9">Binds Neu5Ac(alpha2-6)Gal/GalNAc but has no clear agglutination activity.</text>
</comment>
<comment type="catalytic activity">
    <reaction evidence="5">
        <text>Endohydrolysis of the N-glycosidic bond at one specific adenosine on the 28S rRNA.</text>
        <dbReference type="EC" id="3.2.2.22"/>
    </reaction>
</comment>
<comment type="subunit">
    <text evidence="13">Tetramer of four pairs of disulfide bound A-B chains.</text>
</comment>
<comment type="tissue specificity">
    <text evidence="8">Expressed in bark.</text>
</comment>
<comment type="domain">
    <text evidence="13">The B-chain consists of six tandemly repeated subdomains. Only subdomains 1-alpha and 2-gamma possess a functional carbohydrate-binding site.</text>
</comment>
<comment type="PTM">
    <text evidence="9">The precursor is processed in two chains, A and B, that are linked by a disulfide bond (PubMed:9541002). A small truncated form corresponding roughly to the second ricin B-type lectin domain of the B chain, TrSNAI, can also be produced (PubMed:9541002).</text>
</comment>
<comment type="PTM">
    <text evidence="6 8">Glycosylated (PubMed:27384337, PubMed:8631319). N-glycans of subunit A are (Man)2-3(Xyl)(GlcNAc)2(Fuc) at Asn-40, (GlcNAc)0-2(Man)3(Xyl)(GlcNAc)2(Fuc) or (Man)1-2(GlcNAc)2 at Asn-62, (Man)3(Xyl)(GlcNAc)2(Fuc)0-1 at Asn-144 and (GlcNAc)0-1(Man)3(Xyl)(GlcNAc)2(Fuc) at Asn-260 (PubMed:27384337). N-glycans of subunit B are (Man)3(Xyl)(GlcNAc)2(Fuc) at Asn-492 and (Man)6-9(GlcNAc)2 at Asn-526 (PubMed:27384337).</text>
</comment>
<comment type="similarity">
    <text evidence="12">Belongs to the ribosome-inactivating protein family. Type 2 RIP subfamily.</text>
</comment>
<gene>
    <name evidence="11" type="primary">SNA-I</name>
    <name evidence="10" type="synonym">LECSNAI</name>
    <name evidence="10" type="synonym">SNAI</name>
</gene>